<organism>
    <name type="scientific">Homo sapiens</name>
    <name type="common">Human</name>
    <dbReference type="NCBI Taxonomy" id="9606"/>
    <lineage>
        <taxon>Eukaryota</taxon>
        <taxon>Metazoa</taxon>
        <taxon>Chordata</taxon>
        <taxon>Craniata</taxon>
        <taxon>Vertebrata</taxon>
        <taxon>Euteleostomi</taxon>
        <taxon>Mammalia</taxon>
        <taxon>Eutheria</taxon>
        <taxon>Euarchontoglires</taxon>
        <taxon>Primates</taxon>
        <taxon>Haplorrhini</taxon>
        <taxon>Catarrhini</taxon>
        <taxon>Hominidae</taxon>
        <taxon>Homo</taxon>
    </lineage>
</organism>
<name>PRD16_HUMAN</name>
<feature type="chain" id="PRO_0000047773" description="Histone-lysine N-methyltransferase PRDM16">
    <location>
        <begin position="1"/>
        <end position="1276"/>
    </location>
</feature>
<feature type="domain" description="SET" evidence="3">
    <location>
        <begin position="82"/>
        <end position="211"/>
    </location>
</feature>
<feature type="zinc finger region" description="C2H2-type 1; atypical" evidence="2">
    <location>
        <begin position="230"/>
        <end position="253"/>
    </location>
</feature>
<feature type="zinc finger region" description="C2H2-type 2" evidence="2">
    <location>
        <begin position="281"/>
        <end position="303"/>
    </location>
</feature>
<feature type="zinc finger region" description="C2H2-type 3" evidence="2">
    <location>
        <begin position="309"/>
        <end position="331"/>
    </location>
</feature>
<feature type="zinc finger region" description="C2H2-type 4" evidence="2">
    <location>
        <begin position="337"/>
        <end position="360"/>
    </location>
</feature>
<feature type="zinc finger region" description="C2H2-type 5" evidence="2">
    <location>
        <begin position="366"/>
        <end position="388"/>
    </location>
</feature>
<feature type="zinc finger region" description="C2H2-type 6" evidence="2">
    <location>
        <begin position="394"/>
        <end position="416"/>
    </location>
</feature>
<feature type="zinc finger region" description="C2H2-type 7; atypical" evidence="2">
    <location>
        <begin position="423"/>
        <end position="445"/>
    </location>
</feature>
<feature type="zinc finger region" description="C2H2-type 8" evidence="2">
    <location>
        <begin position="951"/>
        <end position="973"/>
    </location>
</feature>
<feature type="zinc finger region" description="C2H2-type 9" evidence="2">
    <location>
        <begin position="979"/>
        <end position="1002"/>
    </location>
</feature>
<feature type="zinc finger region" description="C2H2-type 10" evidence="2">
    <location>
        <begin position="1008"/>
        <end position="1032"/>
    </location>
</feature>
<feature type="region of interest" description="Disordered" evidence="4">
    <location>
        <begin position="1"/>
        <end position="68"/>
    </location>
</feature>
<feature type="region of interest" description="Disordered" evidence="4">
    <location>
        <begin position="533"/>
        <end position="657"/>
    </location>
</feature>
<feature type="region of interest" description="Interaction with CTBP1, CTBP2 and ZNF516" evidence="1">
    <location>
        <begin position="679"/>
        <end position="1038"/>
    </location>
</feature>
<feature type="region of interest" description="Mediates interaction with SKI and regulation of TGF-beta signaling" evidence="11">
    <location>
        <begin position="739"/>
        <end position="1276"/>
    </location>
</feature>
<feature type="region of interest" description="Disordered" evidence="4">
    <location>
        <begin position="772"/>
        <end position="804"/>
    </location>
</feature>
<feature type="region of interest" description="Disordered" evidence="4">
    <location>
        <begin position="1033"/>
        <end position="1065"/>
    </location>
</feature>
<feature type="region of interest" description="Disordered" evidence="4">
    <location>
        <begin position="1105"/>
        <end position="1163"/>
    </location>
</feature>
<feature type="compositionally biased region" description="Basic residues" evidence="4">
    <location>
        <begin position="1"/>
        <end position="10"/>
    </location>
</feature>
<feature type="compositionally biased region" description="Polar residues" evidence="4">
    <location>
        <begin position="561"/>
        <end position="570"/>
    </location>
</feature>
<feature type="compositionally biased region" description="Basic and acidic residues" evidence="4">
    <location>
        <begin position="575"/>
        <end position="597"/>
    </location>
</feature>
<feature type="compositionally biased region" description="Low complexity" evidence="4">
    <location>
        <begin position="609"/>
        <end position="624"/>
    </location>
</feature>
<feature type="compositionally biased region" description="Basic and acidic residues" evidence="4">
    <location>
        <begin position="632"/>
        <end position="642"/>
    </location>
</feature>
<feature type="compositionally biased region" description="Polar residues" evidence="4">
    <location>
        <begin position="1047"/>
        <end position="1058"/>
    </location>
</feature>
<feature type="compositionally biased region" description="Acidic residues" evidence="4">
    <location>
        <begin position="1116"/>
        <end position="1133"/>
    </location>
</feature>
<feature type="splice variant" id="VSP_038063" description="In isoform 4." evidence="17">
    <location>
        <begin position="1"/>
        <end position="184"/>
    </location>
</feature>
<feature type="splice variant" id="VSP_038064" description="In isoform 3." evidence="16">
    <original>Q</original>
    <variation>QV</variation>
    <location>
        <position position="191"/>
    </location>
</feature>
<feature type="splice variant" id="VSP_038065" description="In isoform 3." evidence="16">
    <location>
        <position position="868"/>
    </location>
</feature>
<feature type="splice variant" id="VSP_006932" description="In isoform 2." evidence="15">
    <location>
        <begin position="1233"/>
        <end position="1251"/>
    </location>
</feature>
<feature type="sequence variant" id="VAR_070212" description="In CMD1LL; uncertain significance; dbSNP:rs200052869." evidence="13">
    <original>E</original>
    <variation>K</variation>
    <location>
        <position position="271"/>
    </location>
</feature>
<feature type="sequence variant" id="VAR_070213" description="In CMD1LL; uncertain significance; dbSNP:rs397514744." evidence="13">
    <original>P</original>
    <variation>L</variation>
    <location>
        <position position="291"/>
    </location>
</feature>
<feature type="sequence variant" id="VAR_031433" description="In dbSNP:rs870124." evidence="5 6 10">
    <original>S</original>
    <variation>P</variation>
    <location>
        <position position="533"/>
    </location>
</feature>
<feature type="sequence variant" id="VAR_031434" description="In dbSNP:rs2493292.">
    <original>P</original>
    <variation>L</variation>
    <location>
        <position position="633"/>
    </location>
</feature>
<feature type="sequence variant" id="VAR_070214" description="In LVNC8; dbSNP:rs397514743." evidence="13">
    <original>N</original>
    <variation>S</variation>
    <location>
        <position position="816"/>
    </location>
</feature>
<feature type="sequence variant" id="VAR_070215" description="In CMD1LL; uncertain significance; dbSNP:rs202115331." evidence="13">
    <original>L</original>
    <variation>P</variation>
    <location>
        <position position="887"/>
    </location>
</feature>
<feature type="sequence variant" id="VAR_070216" description="In dbSNP:rs201654872." evidence="13">
    <original>V</original>
    <variation>M</variation>
    <location>
        <position position="1101"/>
    </location>
</feature>
<feature type="sequence conflict" description="In Ref. 2; AAG33382." evidence="17" ref="2">
    <original>PPS</original>
    <variation>SPP</variation>
    <location>
        <begin position="50"/>
        <end position="52"/>
    </location>
</feature>
<feature type="sequence conflict" description="In Ref. 2; AAG33382." evidence="17" ref="2">
    <original>L</original>
    <variation>F</variation>
    <location>
        <position position="324"/>
    </location>
</feature>
<feature type="sequence conflict" description="In Ref. 2; AAG33382." evidence="17" ref="2">
    <original>S</original>
    <variation>Y</variation>
    <location>
        <position position="491"/>
    </location>
</feature>
<feature type="sequence conflict" description="In Ref. 1; BAB84297." evidence="17" ref="1">
    <original>N</original>
    <variation>K</variation>
    <location>
        <position position="1022"/>
    </location>
</feature>
<feature type="strand" evidence="20">
    <location>
        <begin position="84"/>
        <end position="91"/>
    </location>
</feature>
<feature type="turn" evidence="20">
    <location>
        <begin position="92"/>
        <end position="94"/>
    </location>
</feature>
<feature type="strand" evidence="20">
    <location>
        <begin position="95"/>
        <end position="102"/>
    </location>
</feature>
<feature type="strand" evidence="20">
    <location>
        <begin position="126"/>
        <end position="129"/>
    </location>
</feature>
<feature type="turn" evidence="20">
    <location>
        <begin position="140"/>
        <end position="142"/>
    </location>
</feature>
<feature type="turn" evidence="20">
    <location>
        <begin position="153"/>
        <end position="155"/>
    </location>
</feature>
<feature type="strand" evidence="20">
    <location>
        <begin position="161"/>
        <end position="163"/>
    </location>
</feature>
<feature type="helix" evidence="20">
    <location>
        <begin position="167"/>
        <end position="170"/>
    </location>
</feature>
<feature type="helix" evidence="20">
    <location>
        <begin position="178"/>
        <end position="180"/>
    </location>
</feature>
<feature type="strand" evidence="20">
    <location>
        <begin position="183"/>
        <end position="188"/>
    </location>
</feature>
<feature type="strand" evidence="20">
    <location>
        <begin position="191"/>
        <end position="198"/>
    </location>
</feature>
<feature type="strand" evidence="20">
    <location>
        <begin position="212"/>
        <end position="215"/>
    </location>
</feature>
<feature type="helix" evidence="20">
    <location>
        <begin position="216"/>
        <end position="219"/>
    </location>
</feature>
<feature type="turn" evidence="20">
    <location>
        <begin position="222"/>
        <end position="225"/>
    </location>
</feature>
<proteinExistence type="evidence at protein level"/>
<keyword id="KW-0002">3D-structure</keyword>
<keyword id="KW-0010">Activator</keyword>
<keyword id="KW-0877">Alternative promoter usage</keyword>
<keyword id="KW-0025">Alternative splicing</keyword>
<keyword id="KW-0122">Cardiomyopathy</keyword>
<keyword id="KW-0160">Chromosomal rearrangement</keyword>
<keyword id="KW-0963">Cytoplasm</keyword>
<keyword id="KW-0221">Differentiation</keyword>
<keyword id="KW-0225">Disease variant</keyword>
<keyword id="KW-0238">DNA-binding</keyword>
<keyword id="KW-0479">Metal-binding</keyword>
<keyword id="KW-0489">Methyltransferase</keyword>
<keyword id="KW-0539">Nucleus</keyword>
<keyword id="KW-1267">Proteomics identification</keyword>
<keyword id="KW-1185">Reference proteome</keyword>
<keyword id="KW-0677">Repeat</keyword>
<keyword id="KW-0678">Repressor</keyword>
<keyword id="KW-0804">Transcription</keyword>
<keyword id="KW-0805">Transcription regulation</keyword>
<keyword id="KW-0808">Transferase</keyword>
<keyword id="KW-0862">Zinc</keyword>
<keyword id="KW-0863">Zinc-finger</keyword>
<accession>Q9HAZ2</accession>
<accession>A6NHQ8</accession>
<accession>B1AJP7</accession>
<accession>B1AJP8</accession>
<accession>B1AJP9</accession>
<accession>B1WB48</accession>
<accession>Q8WYJ9</accession>
<accession>Q9C0I8</accession>
<protein>
    <recommendedName>
        <fullName evidence="17">Histone-lysine N-methyltransferase PRDM16</fullName>
        <ecNumber evidence="1">2.1.1.367</ecNumber>
    </recommendedName>
    <alternativeName>
        <fullName evidence="17">PR domain zinc finger protein 16</fullName>
    </alternativeName>
    <alternativeName>
        <fullName evidence="17">PR domain-containing protein 16</fullName>
    </alternativeName>
    <alternativeName>
        <fullName evidence="17">Transcription factor MEL1</fullName>
        <shortName evidence="15">MDS1/EVI1-like gene 1</shortName>
    </alternativeName>
</protein>
<sequence length="1276" mass="140251">MRSKARARKLAKSDGDVVNNMYEPNRDLLASHSAEDEAEDSAMSPIPVGPPSPFPTSEDFTPKEGSPYEAPVYIPEDIPIPADFELRESSIPGAGLGVWAKRKMEAGERLGPCVVVPRAAAKETDFGWEQILTDVEVSPQEGCITKISEDLGSEKFCVDANQAGAGSWLKYIRVACSCDDQNLTMCQISEQIYYKVIKDIEPGEELLVHVKEGVYPLGTVPPGLDEEPTFRCDECDELFQSKLDLRRHKKYTCGSVGAALYEGLAEELKPEGLGGGSGQAHECKDCERMFPNKYSLEQHMVIHTEEREYKCDQCPKAFNWKSNLIRHQMSHDSGKRFECENCVKVFTDPSNLQRHIRSQHVGARAHACPDCGKTFATSSGLKQHKHIHSTVKPFICEVCHKSYTQFSNLCRHKRMHADCRTQIKCKDCGQMFSTTSSLNKHRRFCEGKNHYTPGGIFAPGLPLTPSPMMDKAKPSPSLNHASLGFNEYFPSRPHPGSLPFSTAPPTFPALTPGFPGIFPPSLYPRPPLLPPTSLLKSPLNHTQDAKLPSPLGNPALPLVSAVSNSSQGTTAAAGPEEKFESRLEDSCVEKLKTRSSDMSDGSDFEDVNTTTGTDLDTTTGTGSDLDSDVDSDPDKDKGKGKSAEGQPKFGGGLAPPGAPNSVAEVPVFYSQHSFFPPPDEQLLTATGAAGDSIKAIASIAEKYFGPGFMGMQEKKLGSLPYHSAFPFQFLPNFPHSLYPFTDRALAHNLLVKAEPKSPRDALKVGGPSAECPFDLTTKPKDVKPILPMPKGPSAPASGEEQPLDLSIGSRARASQNGGGREPRKNHVYGERKLGAGEGLPQVCPARMPQQPPLHYAKPSPFFMDPIYSRVEKRKVTDPVGALKEKYLRPSPLLFHPQMSAIETMTEKLESFAAMKADSGSSLQPLPHHPFNFRSPPPTLSDPILRKGKERYTCRYCGKIFPRSANLTRHLRTHTGEQPYRCKYCDRSFSISSNLQRHVRNIHNKEKPFKCHLCNRCFGQQTNLDRHLKKHEHENAPVSQHPGVLTNHLGTSASSPTSESDNHALLDEKEDSYFSEIRNFIANSEMNQASTRTEKRADMQIVDGSAQCPGLASEKQEDVEEEDDDDLEEDDEDSLAGKSQDDTVSPAPEPQAAYEDEEDEEPAASLAVGFDHTRRCAEDHEGGLLALEPMPTFGKGLDLRRAAEEAFEVKDVLNSTLDSEALKHTLCRQAKNQAYAMMLSLSEDTPLHTPSQGSLDAWLKVTGATSESGAFHPINHL</sequence>
<reference key="1">
    <citation type="journal article" date="2000" name="Blood">
        <title>A novel gene, MEL1, mapped to 1p36.3 is highly homologous to the MDS1/EVI1 gene and is transcriptionally activated in t(1;3)(p36;q21)-positive leukemia cells.</title>
        <authorList>
            <person name="Mochizuki N."/>
            <person name="Shimizu S."/>
            <person name="Nagasawa T."/>
            <person name="Tanaka H."/>
            <person name="Taniwaki M."/>
            <person name="Yokota J."/>
            <person name="Morishita K."/>
        </authorList>
    </citation>
    <scope>NUCLEOTIDE SEQUENCE [MRNA] (ISOFORM 2)</scope>
    <scope>VARIANT PRO-533</scope>
    <scope>CHROMOSOMAL TRANSLOCATION</scope>
    <scope>DISEASE</scope>
    <scope>TISSUE SPECIFICITY</scope>
</reference>
<reference key="2">
    <citation type="submission" date="2000-08" db="EMBL/GenBank/DDBJ databases">
        <title>A family of novel PR-domain (PRDM) genes as candidate tumor suppressors.</title>
        <authorList>
            <person name="Fang W."/>
            <person name="Yang X.-H."/>
            <person name="Huang S."/>
        </authorList>
    </citation>
    <scope>NUCLEOTIDE SEQUENCE [MRNA] (ISOFORM 3)</scope>
</reference>
<reference key="3">
    <citation type="journal article" date="2000" name="DNA Res.">
        <title>Prediction of the coding sequences of unidentified human genes. XIX. The complete sequences of 100 new cDNA clones from brain which code for large proteins in vitro.</title>
        <authorList>
            <person name="Nagase T."/>
            <person name="Kikuno R."/>
            <person name="Hattori A."/>
            <person name="Kondo Y."/>
            <person name="Okumura K."/>
            <person name="Ohara O."/>
        </authorList>
    </citation>
    <scope>NUCLEOTIDE SEQUENCE [LARGE SCALE MRNA] (ISOFORM 1)</scope>
    <scope>VARIANT PRO-533</scope>
    <source>
        <tissue>Brain</tissue>
    </source>
</reference>
<reference key="4">
    <citation type="journal article" date="2002" name="DNA Res.">
        <title>Construction of expression-ready cDNA clones for KIAA genes: manual curation of 330 KIAA cDNA clones.</title>
        <authorList>
            <person name="Nakajima D."/>
            <person name="Okazaki N."/>
            <person name="Yamakawa H."/>
            <person name="Kikuno R."/>
            <person name="Ohara O."/>
            <person name="Nagase T."/>
        </authorList>
    </citation>
    <scope>SEQUENCE REVISION</scope>
</reference>
<reference key="5">
    <citation type="journal article" date="2006" name="Nature">
        <title>The DNA sequence and biological annotation of human chromosome 1.</title>
        <authorList>
            <person name="Gregory S.G."/>
            <person name="Barlow K.F."/>
            <person name="McLay K.E."/>
            <person name="Kaul R."/>
            <person name="Swarbreck D."/>
            <person name="Dunham A."/>
            <person name="Scott C.E."/>
            <person name="Howe K.L."/>
            <person name="Woodfine K."/>
            <person name="Spencer C.C.A."/>
            <person name="Jones M.C."/>
            <person name="Gillson C."/>
            <person name="Searle S."/>
            <person name="Zhou Y."/>
            <person name="Kokocinski F."/>
            <person name="McDonald L."/>
            <person name="Evans R."/>
            <person name="Phillips K."/>
            <person name="Atkinson A."/>
            <person name="Cooper R."/>
            <person name="Jones C."/>
            <person name="Hall R.E."/>
            <person name="Andrews T.D."/>
            <person name="Lloyd C."/>
            <person name="Ainscough R."/>
            <person name="Almeida J.P."/>
            <person name="Ambrose K.D."/>
            <person name="Anderson F."/>
            <person name="Andrew R.W."/>
            <person name="Ashwell R.I.S."/>
            <person name="Aubin K."/>
            <person name="Babbage A.K."/>
            <person name="Bagguley C.L."/>
            <person name="Bailey J."/>
            <person name="Beasley H."/>
            <person name="Bethel G."/>
            <person name="Bird C.P."/>
            <person name="Bray-Allen S."/>
            <person name="Brown J.Y."/>
            <person name="Brown A.J."/>
            <person name="Buckley D."/>
            <person name="Burton J."/>
            <person name="Bye J."/>
            <person name="Carder C."/>
            <person name="Chapman J.C."/>
            <person name="Clark S.Y."/>
            <person name="Clarke G."/>
            <person name="Clee C."/>
            <person name="Cobley V."/>
            <person name="Collier R.E."/>
            <person name="Corby N."/>
            <person name="Coville G.J."/>
            <person name="Davies J."/>
            <person name="Deadman R."/>
            <person name="Dunn M."/>
            <person name="Earthrowl M."/>
            <person name="Ellington A.G."/>
            <person name="Errington H."/>
            <person name="Frankish A."/>
            <person name="Frankland J."/>
            <person name="French L."/>
            <person name="Garner P."/>
            <person name="Garnett J."/>
            <person name="Gay L."/>
            <person name="Ghori M.R.J."/>
            <person name="Gibson R."/>
            <person name="Gilby L.M."/>
            <person name="Gillett W."/>
            <person name="Glithero R.J."/>
            <person name="Grafham D.V."/>
            <person name="Griffiths C."/>
            <person name="Griffiths-Jones S."/>
            <person name="Grocock R."/>
            <person name="Hammond S."/>
            <person name="Harrison E.S.I."/>
            <person name="Hart E."/>
            <person name="Haugen E."/>
            <person name="Heath P.D."/>
            <person name="Holmes S."/>
            <person name="Holt K."/>
            <person name="Howden P.J."/>
            <person name="Hunt A.R."/>
            <person name="Hunt S.E."/>
            <person name="Hunter G."/>
            <person name="Isherwood J."/>
            <person name="James R."/>
            <person name="Johnson C."/>
            <person name="Johnson D."/>
            <person name="Joy A."/>
            <person name="Kay M."/>
            <person name="Kershaw J.K."/>
            <person name="Kibukawa M."/>
            <person name="Kimberley A.M."/>
            <person name="King A."/>
            <person name="Knights A.J."/>
            <person name="Lad H."/>
            <person name="Laird G."/>
            <person name="Lawlor S."/>
            <person name="Leongamornlert D.A."/>
            <person name="Lloyd D.M."/>
            <person name="Loveland J."/>
            <person name="Lovell J."/>
            <person name="Lush M.J."/>
            <person name="Lyne R."/>
            <person name="Martin S."/>
            <person name="Mashreghi-Mohammadi M."/>
            <person name="Matthews L."/>
            <person name="Matthews N.S.W."/>
            <person name="McLaren S."/>
            <person name="Milne S."/>
            <person name="Mistry S."/>
            <person name="Moore M.J.F."/>
            <person name="Nickerson T."/>
            <person name="O'Dell C.N."/>
            <person name="Oliver K."/>
            <person name="Palmeiri A."/>
            <person name="Palmer S.A."/>
            <person name="Parker A."/>
            <person name="Patel D."/>
            <person name="Pearce A.V."/>
            <person name="Peck A.I."/>
            <person name="Pelan S."/>
            <person name="Phelps K."/>
            <person name="Phillimore B.J."/>
            <person name="Plumb R."/>
            <person name="Rajan J."/>
            <person name="Raymond C."/>
            <person name="Rouse G."/>
            <person name="Saenphimmachak C."/>
            <person name="Sehra H.K."/>
            <person name="Sheridan E."/>
            <person name="Shownkeen R."/>
            <person name="Sims S."/>
            <person name="Skuce C.D."/>
            <person name="Smith M."/>
            <person name="Steward C."/>
            <person name="Subramanian S."/>
            <person name="Sycamore N."/>
            <person name="Tracey A."/>
            <person name="Tromans A."/>
            <person name="Van Helmond Z."/>
            <person name="Wall M."/>
            <person name="Wallis J.M."/>
            <person name="White S."/>
            <person name="Whitehead S.L."/>
            <person name="Wilkinson J.E."/>
            <person name="Willey D.L."/>
            <person name="Williams H."/>
            <person name="Wilming L."/>
            <person name="Wray P.W."/>
            <person name="Wu Z."/>
            <person name="Coulson A."/>
            <person name="Vaudin M."/>
            <person name="Sulston J.E."/>
            <person name="Durbin R.M."/>
            <person name="Hubbard T."/>
            <person name="Wooster R."/>
            <person name="Dunham I."/>
            <person name="Carter N.P."/>
            <person name="McVean G."/>
            <person name="Ross M.T."/>
            <person name="Harrow J."/>
            <person name="Olson M.V."/>
            <person name="Beck S."/>
            <person name="Rogers J."/>
            <person name="Bentley D.R."/>
        </authorList>
    </citation>
    <scope>NUCLEOTIDE SEQUENCE [LARGE SCALE GENOMIC DNA]</scope>
</reference>
<reference key="6">
    <citation type="journal article" date="2004" name="Genome Res.">
        <title>The status, quality, and expansion of the NIH full-length cDNA project: the Mammalian Gene Collection (MGC).</title>
        <authorList>
            <consortium name="The MGC Project Team"/>
        </authorList>
    </citation>
    <scope>NUCLEOTIDE SEQUENCE [LARGE SCALE MRNA] (ISOFORM 1)</scope>
    <scope>VARIANT PRO-533</scope>
</reference>
<reference key="7">
    <citation type="journal article" date="2003" name="Blood">
        <title>A novel EVI1 gene family, MEL1, lacking a PR domain (MEL1S) is expressed mainly in t(1;3)(p36;q21)-positive AML and blocks G-CSF-induced myeloid differentiation.</title>
        <authorList>
            <person name="Nishikata I."/>
            <person name="Sasaki H."/>
            <person name="Iga M."/>
            <person name="Tateno Y."/>
            <person name="Imayoshi S."/>
            <person name="Asou N."/>
            <person name="Nakamura T."/>
            <person name="Morishita K."/>
        </authorList>
    </citation>
    <scope>FUNCTION</scope>
    <scope>ALTERNATIVE SPLICING (ISOFORMS 2 AND 4)</scope>
    <scope>TISSUE SPECIFICITY</scope>
    <source>
        <tissue>Placenta</tissue>
    </source>
</reference>
<reference key="8">
    <citation type="journal article" date="2003" name="Genes Chromosomes Cancer">
        <title>Breakpoints at 1p36.3 in three MDS/AML(M4) patients with t(1;3)(p36;q21) occur in the first intron and in the 5' region of MEL1.</title>
        <authorList>
            <person name="Xinh P.T."/>
            <person name="Tri N.K."/>
            <person name="Nagao H."/>
            <person name="Nakazato H."/>
            <person name="Taketazu F."/>
            <person name="Fujisawa S."/>
            <person name="Yagasaki F."/>
            <person name="Chen Y.Z."/>
            <person name="Hayashi Y."/>
            <person name="Toyoda A."/>
            <person name="Hattori M."/>
            <person name="Sakaki Y."/>
            <person name="Tokunaga K."/>
            <person name="Sato Y."/>
        </authorList>
    </citation>
    <scope>CHROMOSOMAL TRANSLOCATION</scope>
    <scope>DISEASE</scope>
</reference>
<reference key="9">
    <citation type="journal article" date="2004" name="Blood">
        <title>Aberrant expression of the MEL1S gene identified in association with hypomethylation in adult T-cell leukemia cells.</title>
        <authorList>
            <person name="Yoshida M."/>
            <person name="Nosaka K."/>
            <person name="Yasunaga J."/>
            <person name="Nishikata I."/>
            <person name="Morishita K."/>
            <person name="Matsuoka M."/>
        </authorList>
    </citation>
    <scope>FUNCTION</scope>
    <scope>ALTERNATIVE SPLICING (ISOFORM 4)</scope>
    <scope>DISEASE</scope>
</reference>
<reference key="10">
    <citation type="journal article" date="2009" name="J. Biol. Chem.">
        <title>SKI and MEL1 cooperate to inhibit transforming growth factor-beta signal in gastric cancer cells.</title>
        <authorList>
            <person name="Takahata M."/>
            <person name="Inoue Y."/>
            <person name="Tsuda H."/>
            <person name="Imoto I."/>
            <person name="Koinuma D."/>
            <person name="Hayashi M."/>
            <person name="Ichikura T."/>
            <person name="Yamori T."/>
            <person name="Nagasaki K."/>
            <person name="Yoshida M."/>
            <person name="Matsuoka M."/>
            <person name="Morishita K."/>
            <person name="Yuki K."/>
            <person name="Hanyu A."/>
            <person name="Miyazawa K."/>
            <person name="Inazawa J."/>
            <person name="Miyazono K."/>
            <person name="Imamura T."/>
        </authorList>
    </citation>
    <scope>FUNCTION</scope>
    <scope>SUBCELLULAR LOCATION</scope>
    <scope>INTERACTION WITH HDAC1; SKI; SMAD2 AND SMAD3</scope>
    <scope>REGION</scope>
</reference>
<reference key="11">
    <citation type="journal article" date="2012" name="Cell">
        <title>Prdm3 and Prdm16 are H3K9me1 methyltransferases required for mammalian heterochromatin integrity.</title>
        <authorList>
            <person name="Pinheiro I."/>
            <person name="Margueron R."/>
            <person name="Shukeir N."/>
            <person name="Eisold M."/>
            <person name="Fritzsch C."/>
            <person name="Richter F.M."/>
            <person name="Mittler G."/>
            <person name="Genoud C."/>
            <person name="Goyama S."/>
            <person name="Kurokawa M."/>
            <person name="Son J."/>
            <person name="Reinberg D."/>
            <person name="Lachner M."/>
            <person name="Jenuwein T."/>
        </authorList>
    </citation>
    <scope>IDENTIFICATION BY MASS SPECTROMETRY</scope>
    <scope>SUBCELLULAR LOCATION</scope>
</reference>
<reference key="12">
    <citation type="journal article" date="2015" name="Mol. Cell">
        <title>Cold-inducible Zfp516 activates UCP1 transcription to promote browning of white fat and development of brown fat.</title>
        <authorList>
            <person name="Dempersmier J."/>
            <person name="Sambeat A."/>
            <person name="Gulyaeva O."/>
            <person name="Paul S.M."/>
            <person name="Hudak C.S."/>
            <person name="Raposo H.F."/>
            <person name="Kwan H.Y."/>
            <person name="Kang C."/>
            <person name="Wong R.H."/>
            <person name="Sul H.S."/>
        </authorList>
    </citation>
    <scope>INTERACTION WITH ZNF516</scope>
</reference>
<reference key="13">
    <citation type="journal article" date="2013" name="Am. J. Hum. Genet.">
        <title>Fine mapping of the 1p36 deletion syndrome identifies mutation of PRDM16 as a cause of cardiomyopathy.</title>
        <authorList>
            <person name="Arndt A.K."/>
            <person name="Schafer S."/>
            <person name="Drenckhahn J.D."/>
            <person name="Sabeh M.K."/>
            <person name="Plovie E.R."/>
            <person name="Caliebe A."/>
            <person name="Klopocki E."/>
            <person name="Musso G."/>
            <person name="Werdich A.A."/>
            <person name="Kalwa H."/>
            <person name="Heinig M."/>
            <person name="Padera R.F."/>
            <person name="Wassilew K."/>
            <person name="Bluhm J."/>
            <person name="Harnack C."/>
            <person name="Martitz J."/>
            <person name="Barton P.J."/>
            <person name="Greutmann M."/>
            <person name="Berger F."/>
            <person name="Hubner N."/>
            <person name="Siebert R."/>
            <person name="Kramer H.H."/>
            <person name="Cook S.A."/>
            <person name="MacRae C.A."/>
            <person name="Klaassen S."/>
        </authorList>
    </citation>
    <scope>VARIANT LVNC8 SER-816</scope>
    <scope>VARIANTS CMD1LL LYS-271; LEU-291 AND PRO-887</scope>
    <scope>VARIANT MET-1101</scope>
    <scope>TISSUE SPECIFICITY</scope>
</reference>
<reference key="14">
    <citation type="journal article" date="2016" name="Nature">
        <title>Analysis of protein-coding genetic variation in 60,706 humans.</title>
        <authorList>
            <consortium name="Exome Aggregation Consortium"/>
            <person name="Lek M."/>
            <person name="Karczewski K.J."/>
            <person name="Minikel E.V."/>
            <person name="Samocha K.E."/>
            <person name="Banks E."/>
            <person name="Fennell T."/>
            <person name="O'Donnell-Luria A.H."/>
            <person name="Ware J.S."/>
            <person name="Hill A.J."/>
            <person name="Cummings B.B."/>
            <person name="Tukiainen T."/>
            <person name="Birnbaum D.P."/>
            <person name="Kosmicki J.A."/>
            <person name="Duncan L.E."/>
            <person name="Estrada K."/>
            <person name="Zhao F."/>
            <person name="Zou J."/>
            <person name="Pierce-Hoffman E."/>
            <person name="Berghout J."/>
            <person name="Cooper D.N."/>
            <person name="Deflaux N."/>
            <person name="DePristo M."/>
            <person name="Do R."/>
            <person name="Flannick J."/>
            <person name="Fromer M."/>
            <person name="Gauthier L."/>
            <person name="Goldstein J."/>
            <person name="Gupta N."/>
            <person name="Howrigan D."/>
            <person name="Kiezun A."/>
            <person name="Kurki M.I."/>
            <person name="Moonshine A.L."/>
            <person name="Natarajan P."/>
            <person name="Orozco L."/>
            <person name="Peloso G.M."/>
            <person name="Poplin R."/>
            <person name="Rivas M.A."/>
            <person name="Ruano-Rubio V."/>
            <person name="Rose S.A."/>
            <person name="Ruderfer D.M."/>
            <person name="Shakir K."/>
            <person name="Stenson P.D."/>
            <person name="Stevens C."/>
            <person name="Thomas B.P."/>
            <person name="Tiao G."/>
            <person name="Tusie-Luna M.T."/>
            <person name="Weisburd B."/>
            <person name="Won H.H."/>
            <person name="Yu D."/>
            <person name="Altshuler D.M."/>
            <person name="Ardissino D."/>
            <person name="Boehnke M."/>
            <person name="Danesh J."/>
            <person name="Donnelly S."/>
            <person name="Elosua R."/>
            <person name="Florez J.C."/>
            <person name="Gabriel S.B."/>
            <person name="Getz G."/>
            <person name="Glatt S.J."/>
            <person name="Hultman C.M."/>
            <person name="Kathiresan S."/>
            <person name="Laakso M."/>
            <person name="McCarroll S."/>
            <person name="McCarthy M.I."/>
            <person name="McGovern D."/>
            <person name="McPherson R."/>
            <person name="Neale B.M."/>
            <person name="Palotie A."/>
            <person name="Purcell S.M."/>
            <person name="Saleheen D."/>
            <person name="Scharf J.M."/>
            <person name="Sklar P."/>
            <person name="Sullivan P.F."/>
            <person name="Tuomilehto J."/>
            <person name="Tsuang M.T."/>
            <person name="Watkins H.C."/>
            <person name="Wilson J.G."/>
            <person name="Daly M.J."/>
            <person name="MacArthur D.G."/>
        </authorList>
    </citation>
    <scope>VARIANT MET-1101</scope>
</reference>
<gene>
    <name evidence="19" type="primary">PRDM16</name>
    <name evidence="18" type="synonym">KIAA1675</name>
    <name evidence="15" type="synonym">MEL1</name>
    <name type="synonym">PFM13</name>
</gene>
<evidence type="ECO:0000250" key="1">
    <source>
        <dbReference type="UniProtKB" id="A2A935"/>
    </source>
</evidence>
<evidence type="ECO:0000255" key="2">
    <source>
        <dbReference type="PROSITE-ProRule" id="PRU00042"/>
    </source>
</evidence>
<evidence type="ECO:0000255" key="3">
    <source>
        <dbReference type="PROSITE-ProRule" id="PRU00190"/>
    </source>
</evidence>
<evidence type="ECO:0000256" key="4">
    <source>
        <dbReference type="SAM" id="MobiDB-lite"/>
    </source>
</evidence>
<evidence type="ECO:0000269" key="5">
    <source>
    </source>
</evidence>
<evidence type="ECO:0000269" key="6">
    <source>
    </source>
</evidence>
<evidence type="ECO:0000269" key="7">
    <source>
    </source>
</evidence>
<evidence type="ECO:0000269" key="8">
    <source>
    </source>
</evidence>
<evidence type="ECO:0000269" key="9">
    <source>
    </source>
</evidence>
<evidence type="ECO:0000269" key="10">
    <source>
    </source>
</evidence>
<evidence type="ECO:0000269" key="11">
    <source>
    </source>
</evidence>
<evidence type="ECO:0000269" key="12">
    <source>
    </source>
</evidence>
<evidence type="ECO:0000269" key="13">
    <source>
    </source>
</evidence>
<evidence type="ECO:0000269" key="14">
    <source>
    </source>
</evidence>
<evidence type="ECO:0000303" key="15">
    <source>
    </source>
</evidence>
<evidence type="ECO:0000303" key="16">
    <source ref="2"/>
</evidence>
<evidence type="ECO:0000305" key="17"/>
<evidence type="ECO:0000312" key="18">
    <source>
        <dbReference type="EMBL" id="BAB21766.2"/>
    </source>
</evidence>
<evidence type="ECO:0000312" key="19">
    <source>
        <dbReference type="HGNC" id="HGNC:14000"/>
    </source>
</evidence>
<evidence type="ECO:0007829" key="20">
    <source>
        <dbReference type="PDB" id="2N1I"/>
    </source>
</evidence>
<dbReference type="EC" id="2.1.1.367" evidence="1"/>
<dbReference type="EMBL" id="AB078876">
    <property type="protein sequence ID" value="BAB84297.1"/>
    <property type="molecule type" value="mRNA"/>
</dbReference>
<dbReference type="EMBL" id="AF294278">
    <property type="protein sequence ID" value="AAG33382.1"/>
    <property type="molecule type" value="mRNA"/>
</dbReference>
<dbReference type="EMBL" id="AB051462">
    <property type="protein sequence ID" value="BAB21766.2"/>
    <property type="status" value="ALT_INIT"/>
    <property type="molecule type" value="mRNA"/>
</dbReference>
<dbReference type="EMBL" id="AL008733">
    <property type="status" value="NOT_ANNOTATED_CDS"/>
    <property type="molecule type" value="Genomic_DNA"/>
</dbReference>
<dbReference type="EMBL" id="AL354743">
    <property type="status" value="NOT_ANNOTATED_CDS"/>
    <property type="molecule type" value="Genomic_DNA"/>
</dbReference>
<dbReference type="EMBL" id="AL512383">
    <property type="status" value="NOT_ANNOTATED_CDS"/>
    <property type="molecule type" value="Genomic_DNA"/>
</dbReference>
<dbReference type="EMBL" id="AL590438">
    <property type="status" value="NOT_ANNOTATED_CDS"/>
    <property type="molecule type" value="Genomic_DNA"/>
</dbReference>
<dbReference type="EMBL" id="BC161614">
    <property type="protein sequence ID" value="AAI61614.1"/>
    <property type="molecule type" value="mRNA"/>
</dbReference>
<dbReference type="CCDS" id="CCDS41236.2">
    <molecule id="Q9HAZ2-1"/>
</dbReference>
<dbReference type="CCDS" id="CCDS44048.2">
    <molecule id="Q9HAZ2-2"/>
</dbReference>
<dbReference type="RefSeq" id="NP_071397.3">
    <molecule id="Q9HAZ2-1"/>
    <property type="nucleotide sequence ID" value="NM_022114.3"/>
</dbReference>
<dbReference type="RefSeq" id="NP_955533.2">
    <molecule id="Q9HAZ2-2"/>
    <property type="nucleotide sequence ID" value="NM_199454.3"/>
</dbReference>
<dbReference type="RefSeq" id="XP_011540247.1">
    <property type="nucleotide sequence ID" value="XM_011541945.2"/>
</dbReference>
<dbReference type="PDB" id="2N1I">
    <property type="method" value="NMR"/>
    <property type="chains" value="A=54-226"/>
</dbReference>
<dbReference type="PDB" id="6BW4">
    <property type="method" value="X-ray"/>
    <property type="resolution" value="2.00 A"/>
    <property type="chains" value="B/D=1-12"/>
</dbReference>
<dbReference type="PDBsum" id="2N1I"/>
<dbReference type="PDBsum" id="6BW4"/>
<dbReference type="SMR" id="Q9HAZ2"/>
<dbReference type="BioGRID" id="122023">
    <property type="interactions" value="193"/>
</dbReference>
<dbReference type="FunCoup" id="Q9HAZ2">
    <property type="interactions" value="581"/>
</dbReference>
<dbReference type="IntAct" id="Q9HAZ2">
    <property type="interactions" value="26"/>
</dbReference>
<dbReference type="MINT" id="Q9HAZ2"/>
<dbReference type="STRING" id="9606.ENSP00000270722"/>
<dbReference type="ChEMBL" id="CHEMBL5214855"/>
<dbReference type="GlyGen" id="Q9HAZ2">
    <property type="glycosylation" value="2 sites, 1 N-linked glycan (1 site), 1 O-linked glycan (1 site)"/>
</dbReference>
<dbReference type="iPTMnet" id="Q9HAZ2"/>
<dbReference type="PhosphoSitePlus" id="Q9HAZ2"/>
<dbReference type="BioMuta" id="PRDM16"/>
<dbReference type="DMDM" id="259016328"/>
<dbReference type="jPOST" id="Q9HAZ2"/>
<dbReference type="MassIVE" id="Q9HAZ2"/>
<dbReference type="PaxDb" id="9606-ENSP00000270722"/>
<dbReference type="PeptideAtlas" id="Q9HAZ2"/>
<dbReference type="ProteomicsDB" id="81460">
    <molecule id="Q9HAZ2-1"/>
</dbReference>
<dbReference type="ProteomicsDB" id="81461">
    <molecule id="Q9HAZ2-2"/>
</dbReference>
<dbReference type="ProteomicsDB" id="81462">
    <molecule id="Q9HAZ2-3"/>
</dbReference>
<dbReference type="ProteomicsDB" id="81463">
    <molecule id="Q9HAZ2-4"/>
</dbReference>
<dbReference type="Antibodypedia" id="26849">
    <property type="antibodies" value="214 antibodies from 30 providers"/>
</dbReference>
<dbReference type="DNASU" id="63976"/>
<dbReference type="Ensembl" id="ENST00000270722.10">
    <molecule id="Q9HAZ2-1"/>
    <property type="protein sequence ID" value="ENSP00000270722.5"/>
    <property type="gene ID" value="ENSG00000142611.17"/>
</dbReference>
<dbReference type="Ensembl" id="ENST00000378391.6">
    <molecule id="Q9HAZ2-2"/>
    <property type="protein sequence ID" value="ENSP00000367643.2"/>
    <property type="gene ID" value="ENSG00000142611.17"/>
</dbReference>
<dbReference type="GeneID" id="63976"/>
<dbReference type="KEGG" id="hsa:63976"/>
<dbReference type="MANE-Select" id="ENST00000270722.10">
    <property type="protein sequence ID" value="ENSP00000270722.5"/>
    <property type="RefSeq nucleotide sequence ID" value="NM_022114.4"/>
    <property type="RefSeq protein sequence ID" value="NP_071397.3"/>
</dbReference>
<dbReference type="UCSC" id="uc001ake.4">
    <molecule id="Q9HAZ2-1"/>
    <property type="organism name" value="human"/>
</dbReference>
<dbReference type="AGR" id="HGNC:14000"/>
<dbReference type="CTD" id="63976"/>
<dbReference type="DisGeNET" id="63976"/>
<dbReference type="GeneCards" id="PRDM16"/>
<dbReference type="HGNC" id="HGNC:14000">
    <property type="gene designation" value="PRDM16"/>
</dbReference>
<dbReference type="HPA" id="ENSG00000142611">
    <property type="expression patterns" value="Tissue enhanced (stomach)"/>
</dbReference>
<dbReference type="MalaCards" id="PRDM16"/>
<dbReference type="MIM" id="605557">
    <property type="type" value="gene"/>
</dbReference>
<dbReference type="MIM" id="615373">
    <property type="type" value="phenotype"/>
</dbReference>
<dbReference type="neXtProt" id="NX_Q9HAZ2"/>
<dbReference type="OpenTargets" id="ENSG00000142611"/>
<dbReference type="Orphanet" id="1606">
    <property type="disease" value="1p36 deletion syndrome"/>
</dbReference>
<dbReference type="Orphanet" id="154">
    <property type="disease" value="Familial isolated dilated cardiomyopathy"/>
</dbReference>
<dbReference type="Orphanet" id="54260">
    <property type="disease" value="Left ventricular noncompaction"/>
</dbReference>
<dbReference type="PharmGKB" id="PA33714"/>
<dbReference type="VEuPathDB" id="HostDB:ENSG00000142611"/>
<dbReference type="eggNOG" id="KOG1721">
    <property type="taxonomic scope" value="Eukaryota"/>
</dbReference>
<dbReference type="GeneTree" id="ENSGT00940000160951"/>
<dbReference type="InParanoid" id="Q9HAZ2"/>
<dbReference type="OMA" id="PRGAYED"/>
<dbReference type="OrthoDB" id="9368434at2759"/>
<dbReference type="PAN-GO" id="Q9HAZ2">
    <property type="GO annotations" value="5 GO annotations based on evolutionary models"/>
</dbReference>
<dbReference type="PhylomeDB" id="Q9HAZ2"/>
<dbReference type="TreeFam" id="TF315309"/>
<dbReference type="BRENDA" id="2.1.1.367">
    <property type="organism ID" value="2681"/>
</dbReference>
<dbReference type="BRENDA" id="2.1.1.370">
    <property type="organism ID" value="2681"/>
</dbReference>
<dbReference type="PathwayCommons" id="Q9HAZ2"/>
<dbReference type="Reactome" id="R-HSA-3214841">
    <property type="pathway name" value="PKMTs methylate histone lysines"/>
</dbReference>
<dbReference type="Reactome" id="R-HSA-9844594">
    <property type="pathway name" value="Transcriptional regulation of brown and beige adipocyte differentiation by EBF2"/>
</dbReference>
<dbReference type="SignaLink" id="Q9HAZ2"/>
<dbReference type="SIGNOR" id="Q9HAZ2"/>
<dbReference type="BioGRID-ORCS" id="63976">
    <property type="hits" value="16 hits in 1165 CRISPR screens"/>
</dbReference>
<dbReference type="ChiTaRS" id="PRDM16">
    <property type="organism name" value="human"/>
</dbReference>
<dbReference type="EvolutionaryTrace" id="Q9HAZ2"/>
<dbReference type="GeneWiki" id="PRDM16"/>
<dbReference type="GenomeRNAi" id="63976"/>
<dbReference type="Pharos" id="Q9HAZ2">
    <property type="development level" value="Tbio"/>
</dbReference>
<dbReference type="PRO" id="PR:Q9HAZ2"/>
<dbReference type="Proteomes" id="UP000005640">
    <property type="component" value="Chromosome 1"/>
</dbReference>
<dbReference type="RNAct" id="Q9HAZ2">
    <property type="molecule type" value="protein"/>
</dbReference>
<dbReference type="Bgee" id="ENSG00000142611">
    <property type="expression patterns" value="Expressed in sural nerve and 141 other cell types or tissues"/>
</dbReference>
<dbReference type="ExpressionAtlas" id="Q9HAZ2">
    <property type="expression patterns" value="baseline and differential"/>
</dbReference>
<dbReference type="GO" id="GO:0016235">
    <property type="term" value="C:aggresome"/>
    <property type="evidence" value="ECO:0000314"/>
    <property type="project" value="HPA"/>
</dbReference>
<dbReference type="GO" id="GO:0005829">
    <property type="term" value="C:cytosol"/>
    <property type="evidence" value="ECO:0000314"/>
    <property type="project" value="HPA"/>
</dbReference>
<dbReference type="GO" id="GO:0005654">
    <property type="term" value="C:nucleoplasm"/>
    <property type="evidence" value="ECO:0000314"/>
    <property type="project" value="HPA"/>
</dbReference>
<dbReference type="GO" id="GO:0005634">
    <property type="term" value="C:nucleus"/>
    <property type="evidence" value="ECO:0000314"/>
    <property type="project" value="UniProtKB"/>
</dbReference>
<dbReference type="GO" id="GO:0017053">
    <property type="term" value="C:transcription repressor complex"/>
    <property type="evidence" value="ECO:0000250"/>
    <property type="project" value="UniProtKB"/>
</dbReference>
<dbReference type="GO" id="GO:0001228">
    <property type="term" value="F:DNA-binding transcription activator activity, RNA polymerase II-specific"/>
    <property type="evidence" value="ECO:0000318"/>
    <property type="project" value="GO_Central"/>
</dbReference>
<dbReference type="GO" id="GO:0140297">
    <property type="term" value="F:DNA-binding transcription factor binding"/>
    <property type="evidence" value="ECO:0000353"/>
    <property type="project" value="UniProtKB"/>
</dbReference>
<dbReference type="GO" id="GO:0001227">
    <property type="term" value="F:DNA-binding transcription repressor activity, RNA polymerase II-specific"/>
    <property type="evidence" value="ECO:0000314"/>
    <property type="project" value="ARUK-UCL"/>
</dbReference>
<dbReference type="GO" id="GO:0140938">
    <property type="term" value="F:histone H3 methyltransferase activity"/>
    <property type="evidence" value="ECO:0000304"/>
    <property type="project" value="Reactome"/>
</dbReference>
<dbReference type="GO" id="GO:0046974">
    <property type="term" value="F:histone H3K9 methyltransferase activity"/>
    <property type="evidence" value="ECO:0000250"/>
    <property type="project" value="UniProtKB"/>
</dbReference>
<dbReference type="GO" id="GO:0140948">
    <property type="term" value="F:histone H3K9 monomethyltransferase activity"/>
    <property type="evidence" value="ECO:0007669"/>
    <property type="project" value="UniProtKB-EC"/>
</dbReference>
<dbReference type="GO" id="GO:0140947">
    <property type="term" value="F:histone H3K9me2 methyltransferase activity"/>
    <property type="evidence" value="ECO:0007669"/>
    <property type="project" value="RHEA"/>
</dbReference>
<dbReference type="GO" id="GO:0000978">
    <property type="term" value="F:RNA polymerase II cis-regulatory region sequence-specific DNA binding"/>
    <property type="evidence" value="ECO:0000318"/>
    <property type="project" value="GO_Central"/>
</dbReference>
<dbReference type="GO" id="GO:0043565">
    <property type="term" value="F:sequence-specific DNA binding"/>
    <property type="evidence" value="ECO:0000314"/>
    <property type="project" value="UniProtKB"/>
</dbReference>
<dbReference type="GO" id="GO:0000976">
    <property type="term" value="F:transcription cis-regulatory region binding"/>
    <property type="evidence" value="ECO:0000314"/>
    <property type="project" value="ARUK-UCL"/>
</dbReference>
<dbReference type="GO" id="GO:0003713">
    <property type="term" value="F:transcription coactivator activity"/>
    <property type="evidence" value="ECO:0000250"/>
    <property type="project" value="UniProtKB"/>
</dbReference>
<dbReference type="GO" id="GO:0003712">
    <property type="term" value="F:transcription coregulator activity"/>
    <property type="evidence" value="ECO:0000318"/>
    <property type="project" value="GO_Central"/>
</dbReference>
<dbReference type="GO" id="GO:0008270">
    <property type="term" value="F:zinc ion binding"/>
    <property type="evidence" value="ECO:0007669"/>
    <property type="project" value="UniProtKB-KW"/>
</dbReference>
<dbReference type="GO" id="GO:0050873">
    <property type="term" value="P:brown fat cell differentiation"/>
    <property type="evidence" value="ECO:0000250"/>
    <property type="project" value="UniProtKB"/>
</dbReference>
<dbReference type="GO" id="GO:0070828">
    <property type="term" value="P:heterochromatin organization"/>
    <property type="evidence" value="ECO:0000250"/>
    <property type="project" value="UniProtKB"/>
</dbReference>
<dbReference type="GO" id="GO:0032259">
    <property type="term" value="P:methylation"/>
    <property type="evidence" value="ECO:0007669"/>
    <property type="project" value="UniProtKB-KW"/>
</dbReference>
<dbReference type="GO" id="GO:0045892">
    <property type="term" value="P:negative regulation of DNA-templated transcription"/>
    <property type="evidence" value="ECO:0000314"/>
    <property type="project" value="UniProtKB"/>
</dbReference>
<dbReference type="GO" id="GO:0030853">
    <property type="term" value="P:negative regulation of granulocyte differentiation"/>
    <property type="evidence" value="ECO:0000314"/>
    <property type="project" value="UniProtKB"/>
</dbReference>
<dbReference type="GO" id="GO:0000122">
    <property type="term" value="P:negative regulation of transcription by RNA polymerase II"/>
    <property type="evidence" value="ECO:0000314"/>
    <property type="project" value="UniProtKB"/>
</dbReference>
<dbReference type="GO" id="GO:0030512">
    <property type="term" value="P:negative regulation of transforming growth factor beta receptor signaling pathway"/>
    <property type="evidence" value="ECO:0000314"/>
    <property type="project" value="UniProtKB"/>
</dbReference>
<dbReference type="GO" id="GO:0120162">
    <property type="term" value="P:positive regulation of cold-induced thermogenesis"/>
    <property type="evidence" value="ECO:0000250"/>
    <property type="project" value="YuBioLab"/>
</dbReference>
<dbReference type="GO" id="GO:0045893">
    <property type="term" value="P:positive regulation of DNA-templated transcription"/>
    <property type="evidence" value="ECO:0000314"/>
    <property type="project" value="UniProtKB"/>
</dbReference>
<dbReference type="GO" id="GO:0043457">
    <property type="term" value="P:regulation of cellular respiration"/>
    <property type="evidence" value="ECO:0000250"/>
    <property type="project" value="UniProtKB"/>
</dbReference>
<dbReference type="GO" id="GO:0006357">
    <property type="term" value="P:regulation of transcription by RNA polymerase II"/>
    <property type="evidence" value="ECO:0000318"/>
    <property type="project" value="GO_Central"/>
</dbReference>
<dbReference type="CDD" id="cd19213">
    <property type="entry name" value="PR-SET_PRDM16"/>
    <property type="match status" value="1"/>
</dbReference>
<dbReference type="FunFam" id="3.30.160.60:FF:000112">
    <property type="entry name" value="Mds1 and evi1 complex locus protein"/>
    <property type="match status" value="1"/>
</dbReference>
<dbReference type="FunFam" id="3.30.160.60:FF:000126">
    <property type="entry name" value="Mds1 and evi1 complex locus protein"/>
    <property type="match status" value="1"/>
</dbReference>
<dbReference type="FunFam" id="3.30.160.60:FF:000150">
    <property type="entry name" value="Mds1 and evi1 complex locus protein"/>
    <property type="match status" value="1"/>
</dbReference>
<dbReference type="FunFam" id="3.30.160.60:FF:000159">
    <property type="entry name" value="Mds1 and evi1 complex locus protein"/>
    <property type="match status" value="1"/>
</dbReference>
<dbReference type="FunFam" id="3.30.160.60:FF:000192">
    <property type="entry name" value="Mds1 and evi1 complex locus protein"/>
    <property type="match status" value="1"/>
</dbReference>
<dbReference type="FunFam" id="2.170.270.10:FF:000025">
    <property type="entry name" value="MDS1 and EVI1 complex locus protein isoform X1"/>
    <property type="match status" value="1"/>
</dbReference>
<dbReference type="FunFam" id="3.30.160.60:FF:000929">
    <property type="entry name" value="Uncharacterized protein, isoform B"/>
    <property type="match status" value="1"/>
</dbReference>
<dbReference type="Gene3D" id="3.30.160.60">
    <property type="entry name" value="Classic Zinc Finger"/>
    <property type="match status" value="8"/>
</dbReference>
<dbReference type="Gene3D" id="2.170.270.10">
    <property type="entry name" value="SET domain"/>
    <property type="match status" value="1"/>
</dbReference>
<dbReference type="InterPro" id="IPR044410">
    <property type="entry name" value="PRDM16_PR-SET"/>
</dbReference>
<dbReference type="InterPro" id="IPR001214">
    <property type="entry name" value="SET_dom"/>
</dbReference>
<dbReference type="InterPro" id="IPR046341">
    <property type="entry name" value="SET_dom_sf"/>
</dbReference>
<dbReference type="InterPro" id="IPR050331">
    <property type="entry name" value="Zinc_finger"/>
</dbReference>
<dbReference type="InterPro" id="IPR036236">
    <property type="entry name" value="Znf_C2H2_sf"/>
</dbReference>
<dbReference type="InterPro" id="IPR013087">
    <property type="entry name" value="Znf_C2H2_type"/>
</dbReference>
<dbReference type="PANTHER" id="PTHR16515:SF66">
    <property type="entry name" value="C2H2-TYPE DOMAIN-CONTAINING PROTEIN"/>
    <property type="match status" value="1"/>
</dbReference>
<dbReference type="PANTHER" id="PTHR16515">
    <property type="entry name" value="PR DOMAIN ZINC FINGER PROTEIN"/>
    <property type="match status" value="1"/>
</dbReference>
<dbReference type="Pfam" id="PF21549">
    <property type="entry name" value="PRDM2_PR"/>
    <property type="match status" value="1"/>
</dbReference>
<dbReference type="Pfam" id="PF00096">
    <property type="entry name" value="zf-C2H2"/>
    <property type="match status" value="9"/>
</dbReference>
<dbReference type="Pfam" id="PF13912">
    <property type="entry name" value="zf-C2H2_6"/>
    <property type="match status" value="1"/>
</dbReference>
<dbReference type="SMART" id="SM00317">
    <property type="entry name" value="SET"/>
    <property type="match status" value="1"/>
</dbReference>
<dbReference type="SMART" id="SM00355">
    <property type="entry name" value="ZnF_C2H2"/>
    <property type="match status" value="10"/>
</dbReference>
<dbReference type="SUPFAM" id="SSF57667">
    <property type="entry name" value="beta-beta-alpha zinc fingers"/>
    <property type="match status" value="5"/>
</dbReference>
<dbReference type="SUPFAM" id="SSF82199">
    <property type="entry name" value="SET domain"/>
    <property type="match status" value="1"/>
</dbReference>
<dbReference type="PROSITE" id="PS50280">
    <property type="entry name" value="SET"/>
    <property type="match status" value="1"/>
</dbReference>
<dbReference type="PROSITE" id="PS00028">
    <property type="entry name" value="ZINC_FINGER_C2H2_1"/>
    <property type="match status" value="8"/>
</dbReference>
<dbReference type="PROSITE" id="PS50157">
    <property type="entry name" value="ZINC_FINGER_C2H2_2"/>
    <property type="match status" value="10"/>
</dbReference>
<comment type="function">
    <text evidence="1 8 11">Binds DNA and functions as a transcriptional regulator (PubMed:12816872). Displays histone methyltransferase activity and monomethylates 'Lys-9' of histone H3 (H3K9me1) in vitro (By similarity). Probably catalyzes the monomethylation of free histone H3 in the cytoplasm which is then transported to the nucleus and incorporated into nucleosomes where SUV39H methyltransferases use it as a substrate to catalyze histone H3 'Lys-9' trimethylation (By similarity). Likely to be one of the primary histone methyltransferases along with MECOM/PRDM3 that direct cytoplasmic H3K9me1 methylation (By similarity). Functions in the differentiation of brown adipose tissue (BAT) which is specialized in dissipating chemical energy in the form of heat in response to cold or excess feeding while white adipose tissue (WAT) is specialized in the storage of excess energy and the control of systemic metabolism (By similarity). Together with CEBPB, regulates the differentiation of myoblastic precursors into brown adipose cells (By similarity). Functions as a repressor of TGF-beta signaling (PubMed:19049980).</text>
</comment>
<comment type="function">
    <molecule>Isoform 4</molecule>
    <text evidence="8 9">Binds DNA and functions as a transcriptional regulator (PubMed:12816872). Functions as a repressor of TGF-beta signaling (PubMed:14656887). May regulate granulocyte differentiation (PubMed:12816872).</text>
</comment>
<comment type="catalytic activity">
    <reaction evidence="1">
        <text>L-lysyl(9)-[histone H3] + S-adenosyl-L-methionine = N(6)-methyl-L-lysyl(9)-[histone H3] + S-adenosyl-L-homocysteine + H(+)</text>
        <dbReference type="Rhea" id="RHEA:60280"/>
        <dbReference type="Rhea" id="RHEA-COMP:15542"/>
        <dbReference type="Rhea" id="RHEA-COMP:15546"/>
        <dbReference type="ChEBI" id="CHEBI:15378"/>
        <dbReference type="ChEBI" id="CHEBI:29969"/>
        <dbReference type="ChEBI" id="CHEBI:57856"/>
        <dbReference type="ChEBI" id="CHEBI:59789"/>
        <dbReference type="ChEBI" id="CHEBI:61929"/>
        <dbReference type="EC" id="2.1.1.367"/>
    </reaction>
</comment>
<comment type="subunit">
    <text evidence="1 11 14">Interacts with CEBPA, CEBPB and CEBPD; the interaction is direct. Interacts with PPARG and PPARA; controls brown adipocytes differentiation. Interacts with CTBP1 and CTBP2; represses the expression of WAT-specific genes. Interacts with PPARGC1A and PPARGC1B; interaction with PPARGC1A or PPARGC1B activates the transcription of BAT-specific gene (By similarity). Interacts with HDAC1, SKI, SMAD2 and SMAD3; the interaction with SKI promotes the recruitment of SMAD3-HDAC1 complex on the promoter of TGF-beta target genes (PubMed:19049980). Interacts with ZNF516; the interaction is direct and may play a role in the transcription of brown adipose tissue-specific gene (PubMed:25578880).</text>
</comment>
<comment type="interaction">
    <interactant intactId="EBI-2795620">
        <id>Q9HAZ2</id>
    </interactant>
    <interactant intactId="EBI-620823">
        <id>Q09028</id>
        <label>RBBP4</label>
    </interactant>
    <organismsDiffer>false</organismsDiffer>
    <experiments>3</experiments>
</comment>
<comment type="interaction">
    <interactant intactId="EBI-5282871">
        <id>Q9HAZ2-2</id>
    </interactant>
    <interactant intactId="EBI-1384883">
        <id>P56546</id>
        <label>Ctbp2</label>
    </interactant>
    <organismsDiffer>true</organismsDiffer>
    <experiments>2</experiments>
</comment>
<comment type="interaction">
    <interactant intactId="EBI-4566658">
        <id>Q9HAZ2-4</id>
    </interactant>
    <interactant intactId="EBI-1384883">
        <id>P56546</id>
        <label>Ctbp2</label>
    </interactant>
    <organismsDiffer>true</organismsDiffer>
    <experiments>2</experiments>
</comment>
<comment type="subcellular location">
    <subcellularLocation>
        <location evidence="11">Nucleus</location>
    </subcellularLocation>
    <subcellularLocation>
        <location evidence="12">Cytoplasm</location>
    </subcellularLocation>
</comment>
<comment type="alternative products">
    <event type="alternative promoter"/>
    <event type="alternative splicing"/>
    <isoform>
        <id>Q9HAZ2-1</id>
        <name>1</name>
        <sequence type="displayed"/>
    </isoform>
    <isoform>
        <id>Q9HAZ2-2</id>
        <name>2</name>
        <name>MEL1L</name>
        <sequence type="described" ref="VSP_006932"/>
    </isoform>
    <isoform>
        <id>Q9HAZ2-3</id>
        <name>3</name>
        <sequence type="described" ref="VSP_038064 VSP_038065"/>
    </isoform>
    <isoform>
        <id>Q9HAZ2-4</id>
        <name>4</name>
        <name>MEL1S</name>
        <sequence type="described" ref="VSP_038063"/>
    </isoform>
</comment>
<comment type="tissue specificity">
    <text evidence="5 8 13">Expressed in uterus and kidney. Expressed in both cardiomyocytes and interstitial cells.</text>
</comment>
<comment type="disease" evidence="13">
    <disease id="DI-03859">
        <name>Left ventricular non-compaction 8</name>
        <acronym>LVNC8</acronym>
        <description>A form of left ventricular non-compaction, a cardiomyopathy due to myocardial morphogenesis arrest and characterized by a hypertrophic left ventricle, a severely thickened 2-layered myocardium, numerous prominent trabeculations, deep intertrabecular recesses, and poor systolic function. Clinical manifestations are variable. Some affected individuals experience no symptoms at all, others develop heart failure. In some cases, left ventricular non-compaction is associated with other congenital heart anomalies. LVNC8 is an autosomal dominant condition.</description>
        <dbReference type="MIM" id="615373"/>
    </disease>
    <text>The disease is caused by variants affecting the gene represented in this entry.</text>
</comment>
<comment type="disease" evidence="13">
    <disease id="DI-03860">
        <name>Cardiomyopathy, dilated, 1LL</name>
        <acronym>CMD1LL</acronym>
        <description>A disorder characterized by ventricular dilation and impaired systolic function, resulting in congestive heart failure and arrhythmia. Patients are at risk of premature death.</description>
        <dbReference type="MIM" id="615373"/>
    </disease>
    <text>The disease is caused by variants affecting the gene represented in this entry.</text>
</comment>
<comment type="disease">
    <text evidence="5 7">A chromosomal aberration involving PRDM16 is found in myelodysplastic syndrome (MDS) and acute myeloid leukemia (AML). Reciprocal translocation t(1;3)(p36;q21). Isoform 4 is specifically expressed in adult T-cell leukemia.</text>
</comment>
<comment type="miscellaneous">
    <molecule>Isoform 4</molecule>
    <text evidence="17">Produced by alternative promoter usage.</text>
</comment>
<comment type="similarity">
    <text evidence="17">Belongs to the PRDM16 family.</text>
</comment>
<comment type="sequence caution" evidence="17">
    <conflict type="erroneous initiation">
        <sequence resource="EMBL-CDS" id="BAB21766"/>
    </conflict>
    <text>Extended N-terminus.</text>
</comment>
<comment type="online information" name="Atlas of Genetics and Cytogenetics in Oncology and Haematology">
    <link uri="https://atlasgeneticsoncology.org/gene/408/PRDM16MEL1"/>
</comment>